<reference key="1">
    <citation type="journal article" date="1987" name="Proc. Natl. Acad. Sci. U.S.A.">
        <title>Cytochrome P450c17 (steroid 17 alpha-hydroxylase/17,20 lyase): cloning of human adrenal and testis cDNAs indicates the same gene is expressed in both tissues.</title>
        <authorList>
            <person name="Chung B.-C."/>
            <person name="Picado-Leonard J."/>
            <person name="Haniu M."/>
            <person name="Bienkowski M."/>
            <person name="Hall P.F."/>
            <person name="Shively J.E."/>
            <person name="Miller W.L."/>
        </authorList>
    </citation>
    <scope>NUCLEOTIDE SEQUENCE [MRNA]</scope>
    <source>
        <tissue>Adrenal gland</tissue>
        <tissue>Testis</tissue>
    </source>
</reference>
<reference key="2">
    <citation type="journal article" date="1992" name="Biochim. Biophys. Acta">
        <title>Nucleotide sequence of a cDNA encoding porcine testis 17 alpha-hydroxylase cytochrome P-450.</title>
        <authorList>
            <person name="Conley A.J."/>
            <person name="Graham-Lorence S.E."/>
            <person name="Kagimoto M."/>
            <person name="Lorence M.C."/>
            <person name="Murry B.A."/>
            <person name="Oka K."/>
            <person name="Sanders D."/>
            <person name="Mason J.I."/>
        </authorList>
    </citation>
    <scope>NUCLEOTIDE SEQUENCE [MRNA]</scope>
    <source>
        <tissue>Testis</tissue>
    </source>
</reference>
<reference key="3">
    <citation type="journal article" date="1992" name="Biochim. Biophys. Acta">
        <title>Gene for 17 alpha-hydroxylase/C (17-20) lyase P-450: complete nucleotide sequence of the porcine gene and 5' upstream sequence of the rat gene.</title>
        <authorList>
            <person name="Zhang P."/>
            <person name="Nason T.F."/>
            <person name="Han X.G."/>
            <person name="Hall P.F."/>
        </authorList>
    </citation>
    <scope>NUCLEOTIDE SEQUENCE [GENOMIC DNA]</scope>
    <source>
        <tissue>Kidney</tissue>
    </source>
</reference>
<reference key="4">
    <citation type="submission" date="1995-11" db="EMBL/GenBank/DDBJ databases">
        <authorList>
            <person name="Conley A.J."/>
            <person name="Chu X."/>
            <person name="Corbin C.J."/>
        </authorList>
    </citation>
    <scope>NUCLEOTIDE SEQUENCE</scope>
</reference>
<keyword id="KW-0256">Endoplasmic reticulum</keyword>
<keyword id="KW-0349">Heme</keyword>
<keyword id="KW-0408">Iron</keyword>
<keyword id="KW-0443">Lipid metabolism</keyword>
<keyword id="KW-0456">Lyase</keyword>
<keyword id="KW-0472">Membrane</keyword>
<keyword id="KW-0479">Metal-binding</keyword>
<keyword id="KW-0492">Microsome</keyword>
<keyword id="KW-0503">Monooxygenase</keyword>
<keyword id="KW-0560">Oxidoreductase</keyword>
<keyword id="KW-1185">Reference proteome</keyword>
<keyword id="KW-0755">Steroidogenesis</keyword>
<evidence type="ECO:0000250" key="1"/>
<evidence type="ECO:0000250" key="2">
    <source>
        <dbReference type="UniProtKB" id="P05093"/>
    </source>
</evidence>
<evidence type="ECO:0000305" key="3"/>
<proteinExistence type="evidence at transcript level"/>
<feature type="chain" id="PRO_0000051940" description="Steroid 17-alpha-hydroxylase/17,20 lyase">
    <location>
        <begin position="1"/>
        <end position="509"/>
    </location>
</feature>
<feature type="binding site" evidence="2">
    <location>
        <position position="202"/>
    </location>
    <ligand>
        <name>substrate</name>
    </ligand>
</feature>
<feature type="binding site" description="axial binding residue" evidence="1">
    <location>
        <position position="442"/>
    </location>
    <ligand>
        <name>heme</name>
        <dbReference type="ChEBI" id="CHEBI:30413"/>
    </ligand>
    <ligandPart>
        <name>Fe</name>
        <dbReference type="ChEBI" id="CHEBI:18248"/>
    </ligandPart>
</feature>
<feature type="sequence conflict" description="In Ref. 1; no nucleotide entry." evidence="3" ref="1">
    <original>RGHQHMNF</original>
    <variation>FL</variation>
    <location>
        <begin position="46"/>
        <end position="53"/>
    </location>
</feature>
<feature type="sequence conflict" description="In Ref. 3; CAA77878." evidence="3" ref="3">
    <original>M</original>
    <variation>I</variation>
    <location>
        <position position="51"/>
    </location>
</feature>
<feature type="sequence conflict" description="In Ref. 1; no nucleotide entry." evidence="3" ref="1">
    <original>S</original>
    <variation>D</variation>
    <location>
        <position position="70"/>
    </location>
</feature>
<feature type="sequence conflict" description="In Ref. 1; no nucleotide entry." evidence="3" ref="1">
    <original>R</original>
    <variation>K</variation>
    <location>
        <position position="98"/>
    </location>
</feature>
<feature type="sequence conflict" description="In Ref. 3; CAA77878." evidence="3" ref="3">
    <location>
        <begin position="108"/>
        <end position="116"/>
    </location>
</feature>
<feature type="sequence conflict" description="In Ref. 1; no nucleotide entry." evidence="3" ref="1">
    <original>H</original>
    <variation>E</variation>
    <location>
        <position position="117"/>
    </location>
</feature>
<feature type="sequence conflict" description="In Ref. 1; no nucleotide entry." evidence="3" ref="1">
    <original>KLALSTFSLFKGGNL</original>
    <variation>SLF</variation>
    <location>
        <begin position="126"/>
        <end position="140"/>
    </location>
</feature>
<feature type="sequence conflict" description="In Ref. 1; no nucleotide entry." evidence="3" ref="1">
    <original>NGESIDLAQPLSLAMTNIVSFICFNFSFKKG</original>
    <variation>VIQNACEMDRLKEI</variation>
    <location>
        <begin position="161"/>
        <end position="191"/>
    </location>
</feature>
<feature type="sequence conflict" description="In Ref. 1; no nucleotide entry." evidence="3" ref="1">
    <original>Q</original>
    <variation>D</variation>
    <location>
        <position position="196"/>
    </location>
</feature>
<feature type="sequence conflict" description="In Ref. 1; no nucleotide entry." evidence="3" ref="1">
    <original>FNDGILDAVG</original>
    <variation>IEEGELT</variation>
    <location>
        <begin position="201"/>
        <end position="210"/>
    </location>
</feature>
<feature type="sequence conflict" description="In Ref. 1; no nucleotide entry." evidence="3" ref="1">
    <original>M</original>
    <variation>E</variation>
    <location>
        <position position="238"/>
    </location>
</feature>
<feature type="sequence conflict" description="In Ref. 1; no nucleotide entry." evidence="3" ref="1">
    <original>NSITNLLDIM</original>
    <variation>IL</variation>
    <location>
        <begin position="257"/>
        <end position="266"/>
    </location>
</feature>
<feature type="sequence conflict" description="In Ref. 1; no nucleotide entry." evidence="3" ref="1">
    <location>
        <begin position="270"/>
        <end position="284"/>
    </location>
</feature>
<feature type="sequence conflict" description="In Ref. 1; no nucleotide entry." evidence="3" ref="1">
    <original>HMLATVADIFGAG</original>
    <variation>AC</variation>
    <location>
        <begin position="291"/>
        <end position="303"/>
    </location>
</feature>
<feature type="sequence conflict" description="In Ref. 3; CAA77878." evidence="3" ref="3">
    <original>M</original>
    <variation>S</variation>
    <location>
        <position position="292"/>
    </location>
</feature>
<feature type="sequence conflict" description="In Ref. 1; no nucleotide entry." evidence="3" ref="1">
    <original>A</original>
    <variation>V</variation>
    <location>
        <position position="308"/>
    </location>
</feature>
<feature type="sequence conflict" description="In Ref. 1; no nucleotide entry." evidence="3" ref="1">
    <original>VKWIVAFLLHYPLLRKKIQDAID</original>
    <variation>FIWIQEAIE</variation>
    <location>
        <begin position="311"/>
        <end position="333"/>
    </location>
</feature>
<feature type="sequence conflict" description="In Ref. 3; CAA77878." evidence="3" ref="3">
    <original>LHY</original>
    <variation>ATLC</variation>
    <location>
        <begin position="319"/>
        <end position="321"/>
    </location>
</feature>
<feature type="sequence conflict" description="In Ref. 3; CAA77878." evidence="3" ref="3">
    <original>D</original>
    <variation>E</variation>
    <location>
        <position position="330"/>
    </location>
</feature>
<feature type="sequence conflict" description="In Ref. 3; CAA77878." evidence="3" ref="3">
    <original>D</original>
    <variation>E</variation>
    <location>
        <position position="333"/>
    </location>
</feature>
<feature type="sequence conflict" description="In Ref. 1; no nucleotide entry." evidence="3" ref="1">
    <original>D</original>
    <variation>A</variation>
    <location>
        <position position="389"/>
    </location>
</feature>
<feature type="sequence conflict" description="In Ref. 1; no nucleotide entry." evidence="3" ref="1">
    <original>NLW</original>
    <variation>SLF</variation>
    <location>
        <begin position="395"/>
        <end position="397"/>
    </location>
</feature>
<feature type="sequence conflict" description="In Ref. 2; AAA31008." evidence="3" ref="2">
    <original>H</original>
    <variation>L</variation>
    <location>
        <position position="407"/>
    </location>
</feature>
<sequence>MWVLLVFFLLTLTYLFWPKTKGSGAKYPRSLPVLPVVGSLPFLPRRGHQHMNFFKLQDKYGPIFSFRLGSKTTVVIGDHQLAKEVLLKKGKEFSGRPRVMTLDILSDNQKGIAFADHGTSWQLHRKLALSTFSLFKGGNLKLENIINQEIKVLCDFLATRNGESIDLAQPLSLAMTNIVSFICFNFSFKKGDPALQAIVNFNDGILDAVGKEILYDMFPGIRILPSQTLENMKQCVRMRNELLREILENRKENYSRNSITNLLDIMIQAKTNAESNTGGPDHNLKLLSDRHMLATVADIFGAGVETSASVVKWIVAFLLHYPLLRKKIQDAIDQNIGFNRAPSISDRNQLVLLEATIREVLRFRPVSPTLIPHRAIIDSSIGEFTIDKDTDVVVNLWALHHNEKEWHRPDLFMPERFLDPTGTQLISPSLSYLPFGAGPRSCVGEMLARQELFLFTAGLLQRFDLELPDDGQLPCLVGNPSLVLQIDPFKVKIKERQAWKEAHTEGSTS</sequence>
<accession>P19100</accession>
<accession>Q29553</accession>
<accession>Q99030</accession>
<dbReference type="EC" id="1.14.14.19" evidence="2"/>
<dbReference type="EC" id="1.14.14.32" evidence="2"/>
<dbReference type="EMBL" id="M63507">
    <property type="protein sequence ID" value="AAA31008.1"/>
    <property type="molecule type" value="mRNA"/>
</dbReference>
<dbReference type="EMBL" id="U41525">
    <property type="protein sequence ID" value="AAA84419.1"/>
    <property type="molecule type" value="Genomic_DNA"/>
</dbReference>
<dbReference type="EMBL" id="U41519">
    <property type="protein sequence ID" value="AAA84419.1"/>
    <property type="status" value="JOINED"/>
    <property type="molecule type" value="Genomic_DNA"/>
</dbReference>
<dbReference type="EMBL" id="U41520">
    <property type="protein sequence ID" value="AAA84419.1"/>
    <property type="status" value="JOINED"/>
    <property type="molecule type" value="Genomic_DNA"/>
</dbReference>
<dbReference type="EMBL" id="U41521">
    <property type="protein sequence ID" value="AAA84419.1"/>
    <property type="status" value="JOINED"/>
    <property type="molecule type" value="Genomic_DNA"/>
</dbReference>
<dbReference type="EMBL" id="U41522">
    <property type="protein sequence ID" value="AAA84419.1"/>
    <property type="status" value="JOINED"/>
    <property type="molecule type" value="Genomic_DNA"/>
</dbReference>
<dbReference type="EMBL" id="U41523">
    <property type="protein sequence ID" value="AAA84419.1"/>
    <property type="status" value="JOINED"/>
    <property type="molecule type" value="Genomic_DNA"/>
</dbReference>
<dbReference type="EMBL" id="U41524">
    <property type="protein sequence ID" value="AAA84419.1"/>
    <property type="status" value="JOINED"/>
    <property type="molecule type" value="Genomic_DNA"/>
</dbReference>
<dbReference type="EMBL" id="Z11854">
    <property type="protein sequence ID" value="CAA77878.1"/>
    <property type="molecule type" value="Genomic_DNA"/>
</dbReference>
<dbReference type="EMBL" id="Z11855">
    <property type="protein sequence ID" value="CAA77878.1"/>
    <property type="status" value="JOINED"/>
    <property type="molecule type" value="Genomic_DNA"/>
</dbReference>
<dbReference type="EMBL" id="Z11856">
    <property type="protein sequence ID" value="CAA77878.1"/>
    <property type="status" value="JOINED"/>
    <property type="molecule type" value="Genomic_DNA"/>
</dbReference>
<dbReference type="PIR" id="S22339">
    <property type="entry name" value="S22339"/>
</dbReference>
<dbReference type="RefSeq" id="NP_999593.1">
    <property type="nucleotide sequence ID" value="NM_214428.1"/>
</dbReference>
<dbReference type="SMR" id="P19100"/>
<dbReference type="FunCoup" id="P19100">
    <property type="interactions" value="271"/>
</dbReference>
<dbReference type="STRING" id="9823.ENSSSCP00000011283"/>
<dbReference type="PaxDb" id="9823-ENSSSCP00000011283"/>
<dbReference type="PeptideAtlas" id="P19100"/>
<dbReference type="Ensembl" id="ENSSSCT00000011585.4">
    <property type="protein sequence ID" value="ENSSSCP00000011283.2"/>
    <property type="gene ID" value="ENSSSCG00000010591.4"/>
</dbReference>
<dbReference type="Ensembl" id="ENSSSCT00015028983.1">
    <property type="protein sequence ID" value="ENSSSCP00015011397.1"/>
    <property type="gene ID" value="ENSSSCG00015021503.1"/>
</dbReference>
<dbReference type="Ensembl" id="ENSSSCT00025105077.1">
    <property type="protein sequence ID" value="ENSSSCP00025046858.1"/>
    <property type="gene ID" value="ENSSSCG00025075981.1"/>
</dbReference>
<dbReference type="Ensembl" id="ENSSSCT00035110081.1">
    <property type="protein sequence ID" value="ENSSSCP00035047911.1"/>
    <property type="gene ID" value="ENSSSCG00035080345.1"/>
</dbReference>
<dbReference type="Ensembl" id="ENSSSCT00040076620.1">
    <property type="protein sequence ID" value="ENSSSCP00040032917.1"/>
    <property type="gene ID" value="ENSSSCG00040055008.1"/>
</dbReference>
<dbReference type="Ensembl" id="ENSSSCT00045032693.1">
    <property type="protein sequence ID" value="ENSSSCP00045022639.1"/>
    <property type="gene ID" value="ENSSSCG00045019126.1"/>
</dbReference>
<dbReference type="Ensembl" id="ENSSSCT00055007950.1">
    <property type="protein sequence ID" value="ENSSSCP00055006290.1"/>
    <property type="gene ID" value="ENSSSCG00055004034.1"/>
</dbReference>
<dbReference type="Ensembl" id="ENSSSCT00060070162.1">
    <property type="protein sequence ID" value="ENSSSCP00060030276.1"/>
    <property type="gene ID" value="ENSSSCG00060051529.1"/>
</dbReference>
<dbReference type="Ensembl" id="ENSSSCT00065007534.1">
    <property type="protein sequence ID" value="ENSSSCP00065003217.1"/>
    <property type="gene ID" value="ENSSSCG00065005560.1"/>
</dbReference>
<dbReference type="Ensembl" id="ENSSSCT00070022474.1">
    <property type="protein sequence ID" value="ENSSSCP00070018599.1"/>
    <property type="gene ID" value="ENSSSCG00070011543.1"/>
</dbReference>
<dbReference type="Ensembl" id="ENSSSCT00085004610">
    <property type="protein sequence ID" value="ENSSSCP00085003448"/>
    <property type="gene ID" value="ENSSSCG00085002544"/>
</dbReference>
<dbReference type="Ensembl" id="ENSSSCT00090053999">
    <property type="protein sequence ID" value="ENSSSCP00090033587"/>
    <property type="gene ID" value="ENSSSCG00090030474"/>
</dbReference>
<dbReference type="Ensembl" id="ENSSSCT00105059276">
    <property type="protein sequence ID" value="ENSSSCP00105041748"/>
    <property type="gene ID" value="ENSSSCG00105031168"/>
</dbReference>
<dbReference type="Ensembl" id="ENSSSCT00110044206">
    <property type="protein sequence ID" value="ENSSSCP00110031152"/>
    <property type="gene ID" value="ENSSSCG00110022765"/>
</dbReference>
<dbReference type="Ensembl" id="ENSSSCT00115021668">
    <property type="protein sequence ID" value="ENSSSCP00115020516"/>
    <property type="gene ID" value="ENSSSCG00115012416"/>
</dbReference>
<dbReference type="Ensembl" id="ENSSSCT00130008735">
    <property type="protein sequence ID" value="ENSSSCP00130005876"/>
    <property type="gene ID" value="ENSSSCG00130004713"/>
</dbReference>
<dbReference type="GeneID" id="403330"/>
<dbReference type="KEGG" id="ssc:403330"/>
<dbReference type="CTD" id="1586"/>
<dbReference type="VGNC" id="VGNC:103368">
    <property type="gene designation" value="CYP17A1"/>
</dbReference>
<dbReference type="eggNOG" id="KOG0156">
    <property type="taxonomic scope" value="Eukaryota"/>
</dbReference>
<dbReference type="GeneTree" id="ENSGT00940000155588"/>
<dbReference type="HOGENOM" id="CLU_001570_22_0_1"/>
<dbReference type="InParanoid" id="P19100"/>
<dbReference type="OMA" id="GPQEAME"/>
<dbReference type="OrthoDB" id="1470350at2759"/>
<dbReference type="TreeFam" id="TF105095"/>
<dbReference type="BRENDA" id="1.14.14.19">
    <property type="organism ID" value="6170"/>
</dbReference>
<dbReference type="Reactome" id="R-SSC-193048">
    <property type="pathway name" value="Androgen biosynthesis"/>
</dbReference>
<dbReference type="Reactome" id="R-SSC-194002">
    <property type="pathway name" value="Glucocorticoid biosynthesis"/>
</dbReference>
<dbReference type="UniPathway" id="UPA00788"/>
<dbReference type="Proteomes" id="UP000008227">
    <property type="component" value="Chromosome 14"/>
</dbReference>
<dbReference type="Proteomes" id="UP000314985">
    <property type="component" value="Chromosome 14"/>
</dbReference>
<dbReference type="Proteomes" id="UP000694570">
    <property type="component" value="Unplaced"/>
</dbReference>
<dbReference type="Proteomes" id="UP000694571">
    <property type="component" value="Unplaced"/>
</dbReference>
<dbReference type="Proteomes" id="UP000694720">
    <property type="component" value="Unplaced"/>
</dbReference>
<dbReference type="Proteomes" id="UP000694722">
    <property type="component" value="Unplaced"/>
</dbReference>
<dbReference type="Proteomes" id="UP000694723">
    <property type="component" value="Unplaced"/>
</dbReference>
<dbReference type="Proteomes" id="UP000694724">
    <property type="component" value="Unplaced"/>
</dbReference>
<dbReference type="Proteomes" id="UP000694725">
    <property type="component" value="Unplaced"/>
</dbReference>
<dbReference type="Proteomes" id="UP000694726">
    <property type="component" value="Unplaced"/>
</dbReference>
<dbReference type="Proteomes" id="UP000694727">
    <property type="component" value="Unplaced"/>
</dbReference>
<dbReference type="Proteomes" id="UP000694728">
    <property type="component" value="Unplaced"/>
</dbReference>
<dbReference type="Bgee" id="ENSSSCG00000010591">
    <property type="expression patterns" value="Expressed in testis and 5 other cell types or tissues"/>
</dbReference>
<dbReference type="ExpressionAtlas" id="P19100">
    <property type="expression patterns" value="baseline"/>
</dbReference>
<dbReference type="GO" id="GO:0030424">
    <property type="term" value="C:axon"/>
    <property type="evidence" value="ECO:0007669"/>
    <property type="project" value="Ensembl"/>
</dbReference>
<dbReference type="GO" id="GO:0005789">
    <property type="term" value="C:endoplasmic reticulum membrane"/>
    <property type="evidence" value="ECO:0007669"/>
    <property type="project" value="UniProtKB-SubCell"/>
</dbReference>
<dbReference type="GO" id="GO:0043025">
    <property type="term" value="C:neuronal cell body"/>
    <property type="evidence" value="ECO:0007669"/>
    <property type="project" value="Ensembl"/>
</dbReference>
<dbReference type="GO" id="GO:0020037">
    <property type="term" value="F:heme binding"/>
    <property type="evidence" value="ECO:0000250"/>
    <property type="project" value="UniProtKB"/>
</dbReference>
<dbReference type="GO" id="GO:0005506">
    <property type="term" value="F:iron ion binding"/>
    <property type="evidence" value="ECO:0007669"/>
    <property type="project" value="InterPro"/>
</dbReference>
<dbReference type="GO" id="GO:0016829">
    <property type="term" value="F:lyase activity"/>
    <property type="evidence" value="ECO:0007669"/>
    <property type="project" value="UniProtKB-KW"/>
</dbReference>
<dbReference type="GO" id="GO:0004508">
    <property type="term" value="F:steroid 17-alpha-monooxygenase activity"/>
    <property type="evidence" value="ECO:0000250"/>
    <property type="project" value="UniProtKB"/>
</dbReference>
<dbReference type="GO" id="GO:0006702">
    <property type="term" value="P:androgen biosynthetic process"/>
    <property type="evidence" value="ECO:0007669"/>
    <property type="project" value="Ensembl"/>
</dbReference>
<dbReference type="GO" id="GO:0006704">
    <property type="term" value="P:glucocorticoid biosynthetic process"/>
    <property type="evidence" value="ECO:0007669"/>
    <property type="project" value="UniProtKB-UniPathway"/>
</dbReference>
<dbReference type="GO" id="GO:0042446">
    <property type="term" value="P:hormone biosynthetic process"/>
    <property type="evidence" value="ECO:0000250"/>
    <property type="project" value="UniProtKB"/>
</dbReference>
<dbReference type="GO" id="GO:0042448">
    <property type="term" value="P:progesterone metabolic process"/>
    <property type="evidence" value="ECO:0000250"/>
    <property type="project" value="UniProtKB"/>
</dbReference>
<dbReference type="GO" id="GO:0008202">
    <property type="term" value="P:steroid metabolic process"/>
    <property type="evidence" value="ECO:0000250"/>
    <property type="project" value="UniProtKB"/>
</dbReference>
<dbReference type="CDD" id="cd20673">
    <property type="entry name" value="CYP17A1"/>
    <property type="match status" value="1"/>
</dbReference>
<dbReference type="FunFam" id="1.10.630.10:FF:000002">
    <property type="entry name" value="Cytochrome P450 1A1"/>
    <property type="match status" value="1"/>
</dbReference>
<dbReference type="Gene3D" id="1.10.630.10">
    <property type="entry name" value="Cytochrome P450"/>
    <property type="match status" value="1"/>
</dbReference>
<dbReference type="InterPro" id="IPR001128">
    <property type="entry name" value="Cyt_P450"/>
</dbReference>
<dbReference type="InterPro" id="IPR017972">
    <property type="entry name" value="Cyt_P450_CS"/>
</dbReference>
<dbReference type="InterPro" id="IPR002401">
    <property type="entry name" value="Cyt_P450_E_grp-I"/>
</dbReference>
<dbReference type="InterPro" id="IPR036396">
    <property type="entry name" value="Cyt_P450_sf"/>
</dbReference>
<dbReference type="PANTHER" id="PTHR24289">
    <property type="entry name" value="STEROID 17-ALPHA-HYDROXYLASE/17,20 LYASE"/>
    <property type="match status" value="1"/>
</dbReference>
<dbReference type="PANTHER" id="PTHR24289:SF13">
    <property type="entry name" value="STEROID 17-ALPHA-HYDROXYLASE_17,20 LYASE"/>
    <property type="match status" value="1"/>
</dbReference>
<dbReference type="Pfam" id="PF00067">
    <property type="entry name" value="p450"/>
    <property type="match status" value="1"/>
</dbReference>
<dbReference type="PRINTS" id="PR00463">
    <property type="entry name" value="EP450I"/>
</dbReference>
<dbReference type="PRINTS" id="PR00385">
    <property type="entry name" value="P450"/>
</dbReference>
<dbReference type="SUPFAM" id="SSF48264">
    <property type="entry name" value="Cytochrome P450"/>
    <property type="match status" value="1"/>
</dbReference>
<dbReference type="PROSITE" id="PS00086">
    <property type="entry name" value="CYTOCHROME_P450"/>
    <property type="match status" value="1"/>
</dbReference>
<name>CP17A_PIG</name>
<organism>
    <name type="scientific">Sus scrofa</name>
    <name type="common">Pig</name>
    <dbReference type="NCBI Taxonomy" id="9823"/>
    <lineage>
        <taxon>Eukaryota</taxon>
        <taxon>Metazoa</taxon>
        <taxon>Chordata</taxon>
        <taxon>Craniata</taxon>
        <taxon>Vertebrata</taxon>
        <taxon>Euteleostomi</taxon>
        <taxon>Mammalia</taxon>
        <taxon>Eutheria</taxon>
        <taxon>Laurasiatheria</taxon>
        <taxon>Artiodactyla</taxon>
        <taxon>Suina</taxon>
        <taxon>Suidae</taxon>
        <taxon>Sus</taxon>
    </lineage>
</organism>
<protein>
    <recommendedName>
        <fullName>Steroid 17-alpha-hydroxylase/17,20 lyase</fullName>
        <ecNumber evidence="2">1.14.14.19</ecNumber>
    </recommendedName>
    <alternativeName>
        <fullName>17-alpha-hydroxyprogesterone aldolase</fullName>
        <ecNumber evidence="2">1.14.14.32</ecNumber>
    </alternativeName>
    <alternativeName>
        <fullName>CYPXVII</fullName>
    </alternativeName>
    <alternativeName>
        <fullName>Cytochrome P450 17A1</fullName>
    </alternativeName>
    <alternativeName>
        <fullName>Cytochrome P450-C17</fullName>
        <shortName>Cytochrome P450c17</shortName>
    </alternativeName>
    <alternativeName>
        <fullName>Steroid 17-alpha-monooxygenase</fullName>
    </alternativeName>
</protein>
<comment type="function">
    <text evidence="2">A cytochrome P450 monooxygenase involved in corticoid and androgen biosynthesis. Catalyzes 17-alpha hydroxylation of C21 steroids, which is common for both pathways. A second oxidative step, required only for androgen synthesis, involves an acyl-carbon cleavage. The 17-alpha hydroxy intermediates, as part of adrenal glucocorticoids biosynthesis pathway, are precursors of cortisol. Hydroxylates steroid hormones, pregnenolone and progesterone to form 17-alpha hydroxy metabolites, followed by the cleavage of the C17-C20 bond to form C19 steroids, dehydroepiandrosterone (DHEA) and androstenedione. Has 16-alpha hydroxylase activity. Catalyzes 16-alpha hydroxylation of 17-alpha hydroxy pregnenolone, followed by the cleavage of the C17-C20 bond to form 16-alpha-hydroxy DHEA. Also 16-alpha hydroxylates androgens, relevant for estriol synthesis. Mechanistically, uses molecular oxygen inserting one oxygen atom into a substrate, and reducing the second into a water molecule, with two electrons provided by NADPH via cytochrome P450 reductase (CPR; NADPH-ferrihemoprotein reductase).</text>
</comment>
<comment type="catalytic activity">
    <reaction evidence="2">
        <text>a C21-steroid + reduced [NADPH--hemoprotein reductase] + O2 = a 17alpha-hydroxy-C21-steroid + oxidized [NADPH--hemoprotein reductase] + H2O + H(+)</text>
        <dbReference type="Rhea" id="RHEA:65760"/>
        <dbReference type="Rhea" id="RHEA-COMP:11964"/>
        <dbReference type="Rhea" id="RHEA-COMP:11965"/>
        <dbReference type="ChEBI" id="CHEBI:15377"/>
        <dbReference type="ChEBI" id="CHEBI:15378"/>
        <dbReference type="ChEBI" id="CHEBI:15379"/>
        <dbReference type="ChEBI" id="CHEBI:57618"/>
        <dbReference type="ChEBI" id="CHEBI:58210"/>
        <dbReference type="ChEBI" id="CHEBI:61313"/>
        <dbReference type="ChEBI" id="CHEBI:138141"/>
        <dbReference type="EC" id="1.14.14.19"/>
    </reaction>
    <physiologicalReaction direction="left-to-right" evidence="2">
        <dbReference type="Rhea" id="RHEA:65761"/>
    </physiologicalReaction>
</comment>
<comment type="catalytic activity">
    <reaction evidence="2">
        <text>progesterone + reduced [NADPH--hemoprotein reductase] + O2 = 17alpha-hydroxyprogesterone + oxidized [NADPH--hemoprotein reductase] + H2O + H(+)</text>
        <dbReference type="Rhea" id="RHEA:46308"/>
        <dbReference type="Rhea" id="RHEA-COMP:11964"/>
        <dbReference type="Rhea" id="RHEA-COMP:11965"/>
        <dbReference type="ChEBI" id="CHEBI:15377"/>
        <dbReference type="ChEBI" id="CHEBI:15378"/>
        <dbReference type="ChEBI" id="CHEBI:15379"/>
        <dbReference type="ChEBI" id="CHEBI:17026"/>
        <dbReference type="ChEBI" id="CHEBI:17252"/>
        <dbReference type="ChEBI" id="CHEBI:57618"/>
        <dbReference type="ChEBI" id="CHEBI:58210"/>
        <dbReference type="EC" id="1.14.14.19"/>
    </reaction>
    <physiologicalReaction direction="left-to-right" evidence="2">
        <dbReference type="Rhea" id="RHEA:46309"/>
    </physiologicalReaction>
</comment>
<comment type="catalytic activity">
    <reaction evidence="2">
        <text>pregnenolone + reduced [NADPH--hemoprotein reductase] + O2 = 17alpha-hydroxypregnenolone + oxidized [NADPH--hemoprotein reductase] + H2O + H(+)</text>
        <dbReference type="Rhea" id="RHEA:50236"/>
        <dbReference type="Rhea" id="RHEA-COMP:11964"/>
        <dbReference type="Rhea" id="RHEA-COMP:11965"/>
        <dbReference type="ChEBI" id="CHEBI:15377"/>
        <dbReference type="ChEBI" id="CHEBI:15378"/>
        <dbReference type="ChEBI" id="CHEBI:15379"/>
        <dbReference type="ChEBI" id="CHEBI:16581"/>
        <dbReference type="ChEBI" id="CHEBI:28750"/>
        <dbReference type="ChEBI" id="CHEBI:57618"/>
        <dbReference type="ChEBI" id="CHEBI:58210"/>
        <dbReference type="EC" id="1.14.14.19"/>
    </reaction>
    <physiologicalReaction direction="left-to-right" evidence="2">
        <dbReference type="Rhea" id="RHEA:50237"/>
    </physiologicalReaction>
</comment>
<comment type="catalytic activity">
    <reaction evidence="2">
        <text>17alpha-hydroxyprogesterone + reduced [NADPH--hemoprotein reductase] + O2 = androst-4-ene-3,17-dione + acetate + oxidized [NADPH--hemoprotein reductase] + H2O + 2 H(+)</text>
        <dbReference type="Rhea" id="RHEA:14753"/>
        <dbReference type="Rhea" id="RHEA-COMP:11964"/>
        <dbReference type="Rhea" id="RHEA-COMP:11965"/>
        <dbReference type="ChEBI" id="CHEBI:15377"/>
        <dbReference type="ChEBI" id="CHEBI:15378"/>
        <dbReference type="ChEBI" id="CHEBI:15379"/>
        <dbReference type="ChEBI" id="CHEBI:16422"/>
        <dbReference type="ChEBI" id="CHEBI:17252"/>
        <dbReference type="ChEBI" id="CHEBI:30089"/>
        <dbReference type="ChEBI" id="CHEBI:57618"/>
        <dbReference type="ChEBI" id="CHEBI:58210"/>
        <dbReference type="EC" id="1.14.14.32"/>
    </reaction>
    <physiologicalReaction direction="left-to-right" evidence="2">
        <dbReference type="Rhea" id="RHEA:14754"/>
    </physiologicalReaction>
</comment>
<comment type="catalytic activity">
    <reaction evidence="2">
        <text>17alpha-hydroxyprogesterone + reduced [NADPH--hemoprotein reductase] + O2 = 16alpha,17alpha-dihydroxyprogesterone + oxidized [NADPH--hemoprotein reductase] + H2O + H(+)</text>
        <dbReference type="Rhea" id="RHEA:53216"/>
        <dbReference type="Rhea" id="RHEA-COMP:11964"/>
        <dbReference type="Rhea" id="RHEA-COMP:11965"/>
        <dbReference type="ChEBI" id="CHEBI:763"/>
        <dbReference type="ChEBI" id="CHEBI:15377"/>
        <dbReference type="ChEBI" id="CHEBI:15378"/>
        <dbReference type="ChEBI" id="CHEBI:15379"/>
        <dbReference type="ChEBI" id="CHEBI:17252"/>
        <dbReference type="ChEBI" id="CHEBI:57618"/>
        <dbReference type="ChEBI" id="CHEBI:58210"/>
    </reaction>
    <physiologicalReaction direction="left-to-right" evidence="2">
        <dbReference type="Rhea" id="RHEA:53217"/>
    </physiologicalReaction>
</comment>
<comment type="catalytic activity">
    <reaction evidence="2">
        <text>16alpha,17alpha-dihydroxyprogesterone + reduced [NADPH--hemoprotein reductase] + O2 = 6beta,16alpha,17alpha-trihydroxyprogesterone + oxidized [NADPH--hemoprotein reductase] + H2O + H(+)</text>
        <dbReference type="Rhea" id="RHEA:53220"/>
        <dbReference type="Rhea" id="RHEA-COMP:11964"/>
        <dbReference type="Rhea" id="RHEA-COMP:11965"/>
        <dbReference type="ChEBI" id="CHEBI:763"/>
        <dbReference type="ChEBI" id="CHEBI:15377"/>
        <dbReference type="ChEBI" id="CHEBI:15378"/>
        <dbReference type="ChEBI" id="CHEBI:15379"/>
        <dbReference type="ChEBI" id="CHEBI:57618"/>
        <dbReference type="ChEBI" id="CHEBI:58210"/>
        <dbReference type="ChEBI" id="CHEBI:137046"/>
    </reaction>
    <physiologicalReaction direction="left-to-right" evidence="2">
        <dbReference type="Rhea" id="RHEA:53221"/>
    </physiologicalReaction>
</comment>
<comment type="catalytic activity">
    <reaction evidence="2">
        <text>17alpha-hydroxypregnenolone + reduced [NADPH--hemoprotein reductase] + O2 = 3beta-hydroxyandrost-5-en-17-one + acetate + oxidized [NADPH--hemoprotein reductase] + H2O + 2 H(+)</text>
        <dbReference type="Rhea" id="RHEA:50244"/>
        <dbReference type="Rhea" id="RHEA-COMP:11964"/>
        <dbReference type="Rhea" id="RHEA-COMP:11965"/>
        <dbReference type="ChEBI" id="CHEBI:15377"/>
        <dbReference type="ChEBI" id="CHEBI:15378"/>
        <dbReference type="ChEBI" id="CHEBI:15379"/>
        <dbReference type="ChEBI" id="CHEBI:28689"/>
        <dbReference type="ChEBI" id="CHEBI:28750"/>
        <dbReference type="ChEBI" id="CHEBI:30089"/>
        <dbReference type="ChEBI" id="CHEBI:57618"/>
        <dbReference type="ChEBI" id="CHEBI:58210"/>
        <dbReference type="EC" id="1.14.14.32"/>
    </reaction>
    <physiologicalReaction direction="left-to-right" evidence="2">
        <dbReference type="Rhea" id="RHEA:50245"/>
    </physiologicalReaction>
</comment>
<comment type="catalytic activity">
    <reaction evidence="2">
        <text>16alpha,17alpha-dihydroxypregnenolone + reduced [NADPH--hemoprotein reductase] + O2 = 3beta,16alpha-dihydroxy-androst-5-en-17-one + acetate + oxidized [NADPH--hemoprotein reductase] + H2O + 2 H(+)</text>
        <dbReference type="Rhea" id="RHEA:53224"/>
        <dbReference type="Rhea" id="RHEA-COMP:11964"/>
        <dbReference type="Rhea" id="RHEA-COMP:11965"/>
        <dbReference type="ChEBI" id="CHEBI:15377"/>
        <dbReference type="ChEBI" id="CHEBI:15378"/>
        <dbReference type="ChEBI" id="CHEBI:15379"/>
        <dbReference type="ChEBI" id="CHEBI:27771"/>
        <dbReference type="ChEBI" id="CHEBI:30089"/>
        <dbReference type="ChEBI" id="CHEBI:57618"/>
        <dbReference type="ChEBI" id="CHEBI:58210"/>
        <dbReference type="ChEBI" id="CHEBI:137049"/>
    </reaction>
    <physiologicalReaction direction="left-to-right" evidence="2">
        <dbReference type="Rhea" id="RHEA:53225"/>
    </physiologicalReaction>
</comment>
<comment type="catalytic activity">
    <reaction evidence="2">
        <text>3beta-hydroxyandrost-5-en-17-one + reduced [NADPH--hemoprotein reductase] + O2 = 3beta,16alpha-dihydroxy-androst-5-en-17-one + oxidized [NADPH--hemoprotein reductase] + H2O + H(+)</text>
        <dbReference type="Rhea" id="RHEA:47220"/>
        <dbReference type="Rhea" id="RHEA-COMP:11964"/>
        <dbReference type="Rhea" id="RHEA-COMP:11965"/>
        <dbReference type="ChEBI" id="CHEBI:15377"/>
        <dbReference type="ChEBI" id="CHEBI:15378"/>
        <dbReference type="ChEBI" id="CHEBI:15379"/>
        <dbReference type="ChEBI" id="CHEBI:27771"/>
        <dbReference type="ChEBI" id="CHEBI:28689"/>
        <dbReference type="ChEBI" id="CHEBI:57618"/>
        <dbReference type="ChEBI" id="CHEBI:58210"/>
    </reaction>
    <physiologicalReaction direction="left-to-right" evidence="2">
        <dbReference type="Rhea" id="RHEA:47221"/>
    </physiologicalReaction>
</comment>
<comment type="catalytic activity">
    <reaction evidence="2">
        <text>androst-4-ene-3,17-dione + reduced [NADPH--hemoprotein reductase] + O2 = 16alpha-hydroxyandrost-4-ene-3,17-dione + oxidized [NADPH--hemoprotein reductase] + H2O + H(+)</text>
        <dbReference type="Rhea" id="RHEA:53228"/>
        <dbReference type="Rhea" id="RHEA-COMP:11964"/>
        <dbReference type="Rhea" id="RHEA-COMP:11965"/>
        <dbReference type="ChEBI" id="CHEBI:15377"/>
        <dbReference type="ChEBI" id="CHEBI:15378"/>
        <dbReference type="ChEBI" id="CHEBI:15379"/>
        <dbReference type="ChEBI" id="CHEBI:16422"/>
        <dbReference type="ChEBI" id="CHEBI:27582"/>
        <dbReference type="ChEBI" id="CHEBI:57618"/>
        <dbReference type="ChEBI" id="CHEBI:58210"/>
    </reaction>
    <physiologicalReaction direction="left-to-right" evidence="2">
        <dbReference type="Rhea" id="RHEA:53229"/>
    </physiologicalReaction>
</comment>
<comment type="cofactor">
    <cofactor evidence="2">
        <name>heme</name>
        <dbReference type="ChEBI" id="CHEBI:30413"/>
    </cofactor>
</comment>
<comment type="activity regulation">
    <text evidence="2">Regulated predominantly by intracellular cAMP levels. The 17,20-lyase activity is stimulated by cytochrome b5, which acts as an allosteric effector increasing the Vmax of the lyase activity.</text>
</comment>
<comment type="pathway">
    <text evidence="2">Steroid hormone biosynthesis.</text>
</comment>
<comment type="pathway">
    <text evidence="2">Steroid biosynthesis; glucocorticoid biosynthesis.</text>
</comment>
<comment type="subcellular location">
    <subcellularLocation>
        <location evidence="2">Endoplasmic reticulum membrane</location>
    </subcellularLocation>
    <subcellularLocation>
        <location evidence="2">Microsome membrane</location>
    </subcellularLocation>
</comment>
<comment type="similarity">
    <text evidence="3">Belongs to the cytochrome P450 family.</text>
</comment>
<gene>
    <name type="primary">CYP17A1</name>
    <name type="synonym">CYP17</name>
</gene>